<accession>Q8FB88</accession>
<reference key="1">
    <citation type="journal article" date="2002" name="Proc. Natl. Acad. Sci. U.S.A.">
        <title>Extensive mosaic structure revealed by the complete genome sequence of uropathogenic Escherichia coli.</title>
        <authorList>
            <person name="Welch R.A."/>
            <person name="Burland V."/>
            <person name="Plunkett G. III"/>
            <person name="Redford P."/>
            <person name="Roesch P."/>
            <person name="Rasko D."/>
            <person name="Buckles E.L."/>
            <person name="Liou S.-R."/>
            <person name="Boutin A."/>
            <person name="Hackett J."/>
            <person name="Stroud D."/>
            <person name="Mayhew G.F."/>
            <person name="Rose D.J."/>
            <person name="Zhou S."/>
            <person name="Schwartz D.C."/>
            <person name="Perna N.T."/>
            <person name="Mobley H.L.T."/>
            <person name="Donnenberg M.S."/>
            <person name="Blattner F.R."/>
        </authorList>
    </citation>
    <scope>NUCLEOTIDE SEQUENCE [LARGE SCALE GENOMIC DNA]</scope>
    <source>
        <strain>CFT073 / ATCC 700928 / UPEC</strain>
    </source>
</reference>
<organism>
    <name type="scientific">Escherichia coli O6:H1 (strain CFT073 / ATCC 700928 / UPEC)</name>
    <dbReference type="NCBI Taxonomy" id="199310"/>
    <lineage>
        <taxon>Bacteria</taxon>
        <taxon>Pseudomonadati</taxon>
        <taxon>Pseudomonadota</taxon>
        <taxon>Gammaproteobacteria</taxon>
        <taxon>Enterobacterales</taxon>
        <taxon>Enterobacteriaceae</taxon>
        <taxon>Escherichia</taxon>
    </lineage>
</organism>
<keyword id="KW-0131">Cell cycle</keyword>
<keyword id="KW-0132">Cell division</keyword>
<keyword id="KW-0133">Cell shape</keyword>
<keyword id="KW-0961">Cell wall biogenesis/degradation</keyword>
<keyword id="KW-0963">Cytoplasm</keyword>
<keyword id="KW-0274">FAD</keyword>
<keyword id="KW-0285">Flavoprotein</keyword>
<keyword id="KW-0521">NADP</keyword>
<keyword id="KW-0560">Oxidoreductase</keyword>
<keyword id="KW-0573">Peptidoglycan synthesis</keyword>
<keyword id="KW-1185">Reference proteome</keyword>
<dbReference type="EC" id="1.3.1.98" evidence="2"/>
<dbReference type="EMBL" id="AE014075">
    <property type="protein sequence ID" value="AAN83359.1"/>
    <property type="molecule type" value="Genomic_DNA"/>
</dbReference>
<dbReference type="RefSeq" id="WP_001016654.1">
    <property type="nucleotide sequence ID" value="NZ_CP051263.1"/>
</dbReference>
<dbReference type="SMR" id="Q8FB88"/>
<dbReference type="STRING" id="199310.c4931"/>
<dbReference type="KEGG" id="ecc:c4931"/>
<dbReference type="eggNOG" id="COG0812">
    <property type="taxonomic scope" value="Bacteria"/>
</dbReference>
<dbReference type="HOGENOM" id="CLU_035304_0_0_6"/>
<dbReference type="BioCyc" id="ECOL199310:C4931-MONOMER"/>
<dbReference type="UniPathway" id="UPA00219"/>
<dbReference type="Proteomes" id="UP000001410">
    <property type="component" value="Chromosome"/>
</dbReference>
<dbReference type="GO" id="GO:0005829">
    <property type="term" value="C:cytosol"/>
    <property type="evidence" value="ECO:0007669"/>
    <property type="project" value="TreeGrafter"/>
</dbReference>
<dbReference type="GO" id="GO:0071949">
    <property type="term" value="F:FAD binding"/>
    <property type="evidence" value="ECO:0007669"/>
    <property type="project" value="InterPro"/>
</dbReference>
<dbReference type="GO" id="GO:0008762">
    <property type="term" value="F:UDP-N-acetylmuramate dehydrogenase activity"/>
    <property type="evidence" value="ECO:0007669"/>
    <property type="project" value="UniProtKB-UniRule"/>
</dbReference>
<dbReference type="GO" id="GO:0051301">
    <property type="term" value="P:cell division"/>
    <property type="evidence" value="ECO:0007669"/>
    <property type="project" value="UniProtKB-KW"/>
</dbReference>
<dbReference type="GO" id="GO:0071555">
    <property type="term" value="P:cell wall organization"/>
    <property type="evidence" value="ECO:0007669"/>
    <property type="project" value="UniProtKB-KW"/>
</dbReference>
<dbReference type="GO" id="GO:0009252">
    <property type="term" value="P:peptidoglycan biosynthetic process"/>
    <property type="evidence" value="ECO:0007669"/>
    <property type="project" value="UniProtKB-UniRule"/>
</dbReference>
<dbReference type="GO" id="GO:0008360">
    <property type="term" value="P:regulation of cell shape"/>
    <property type="evidence" value="ECO:0007669"/>
    <property type="project" value="UniProtKB-KW"/>
</dbReference>
<dbReference type="FunFam" id="3.30.465.10:FF:000018">
    <property type="entry name" value="UDP-N-acetylenolpyruvoylglucosamine reductase"/>
    <property type="match status" value="1"/>
</dbReference>
<dbReference type="FunFam" id="3.90.78.10:FF:000002">
    <property type="entry name" value="UDP-N-acetylenolpyruvoylglucosamine reductase"/>
    <property type="match status" value="1"/>
</dbReference>
<dbReference type="Gene3D" id="3.30.465.10">
    <property type="match status" value="1"/>
</dbReference>
<dbReference type="Gene3D" id="3.90.78.10">
    <property type="entry name" value="UDP-N-acetylenolpyruvoylglucosamine reductase, C-terminal domain"/>
    <property type="match status" value="1"/>
</dbReference>
<dbReference type="Gene3D" id="3.30.43.10">
    <property type="entry name" value="Uridine Diphospho-n-acetylenolpyruvylglucosamine Reductase, domain 2"/>
    <property type="match status" value="1"/>
</dbReference>
<dbReference type="HAMAP" id="MF_00037">
    <property type="entry name" value="MurB"/>
    <property type="match status" value="1"/>
</dbReference>
<dbReference type="InterPro" id="IPR016166">
    <property type="entry name" value="FAD-bd_PCMH"/>
</dbReference>
<dbReference type="InterPro" id="IPR036318">
    <property type="entry name" value="FAD-bd_PCMH-like_sf"/>
</dbReference>
<dbReference type="InterPro" id="IPR016167">
    <property type="entry name" value="FAD-bd_PCMH_sub1"/>
</dbReference>
<dbReference type="InterPro" id="IPR016169">
    <property type="entry name" value="FAD-bd_PCMH_sub2"/>
</dbReference>
<dbReference type="InterPro" id="IPR003170">
    <property type="entry name" value="MurB"/>
</dbReference>
<dbReference type="InterPro" id="IPR011601">
    <property type="entry name" value="MurB_C"/>
</dbReference>
<dbReference type="InterPro" id="IPR036635">
    <property type="entry name" value="MurB_C_sf"/>
</dbReference>
<dbReference type="InterPro" id="IPR006094">
    <property type="entry name" value="Oxid_FAD_bind_N"/>
</dbReference>
<dbReference type="NCBIfam" id="TIGR00179">
    <property type="entry name" value="murB"/>
    <property type="match status" value="1"/>
</dbReference>
<dbReference type="NCBIfam" id="NF000755">
    <property type="entry name" value="PRK00046.1"/>
    <property type="match status" value="1"/>
</dbReference>
<dbReference type="NCBIfam" id="NF010478">
    <property type="entry name" value="PRK13903.1"/>
    <property type="match status" value="1"/>
</dbReference>
<dbReference type="PANTHER" id="PTHR21071">
    <property type="entry name" value="UDP-N-ACETYLENOLPYRUVOYLGLUCOSAMINE REDUCTASE"/>
    <property type="match status" value="1"/>
</dbReference>
<dbReference type="PANTHER" id="PTHR21071:SF4">
    <property type="entry name" value="UDP-N-ACETYLENOLPYRUVOYLGLUCOSAMINE REDUCTASE"/>
    <property type="match status" value="1"/>
</dbReference>
<dbReference type="Pfam" id="PF01565">
    <property type="entry name" value="FAD_binding_4"/>
    <property type="match status" value="1"/>
</dbReference>
<dbReference type="Pfam" id="PF02873">
    <property type="entry name" value="MurB_C"/>
    <property type="match status" value="1"/>
</dbReference>
<dbReference type="SUPFAM" id="SSF56176">
    <property type="entry name" value="FAD-binding/transporter-associated domain-like"/>
    <property type="match status" value="1"/>
</dbReference>
<dbReference type="SUPFAM" id="SSF56194">
    <property type="entry name" value="Uridine diphospho-N-Acetylenolpyruvylglucosamine reductase, MurB, C-terminal domain"/>
    <property type="match status" value="1"/>
</dbReference>
<dbReference type="PROSITE" id="PS51387">
    <property type="entry name" value="FAD_PCMH"/>
    <property type="match status" value="1"/>
</dbReference>
<gene>
    <name evidence="2" type="primary">murB</name>
    <name type="ordered locus">c4931</name>
</gene>
<evidence type="ECO:0000250" key="1"/>
<evidence type="ECO:0000255" key="2">
    <source>
        <dbReference type="HAMAP-Rule" id="MF_00037"/>
    </source>
</evidence>
<name>MURB_ECOL6</name>
<protein>
    <recommendedName>
        <fullName evidence="2">UDP-N-acetylenolpyruvoylglucosamine reductase</fullName>
        <ecNumber evidence="2">1.3.1.98</ecNumber>
    </recommendedName>
    <alternativeName>
        <fullName evidence="2">UDP-N-acetylmuramate dehydrogenase</fullName>
    </alternativeName>
</protein>
<proteinExistence type="inferred from homology"/>
<sequence>MNHSLKPWNTFGIDHNAQHIVCAEDEQQLLNAWQHATAEGQPVLILGEGSNVLFLEDYRGTVIINRIKGIEIHDEPDAWYLHVGAGENWHRLVKYTLQEGMPGLENLALIPGCIGSSPIQNIGAYGVELQRVCAYVDCVELATGKQVRLTAKECRFGYRDSIFKHEYQDRFAIVAVGLRLPKEWQPVLTYGDLTRLDPSTVTPQQVFDAVCHMRTTKLPDPKVNGNAGSFFKNPVVSAETANALLAQFPTAPHYPQVDGSVKLAAGWLIDQCQLKGTQIGGAAVHRQQALVLINEHDAKSEDVVQLAHHVRQKVGEKFNVWLEPEVRFIGASGEVSAVETIS</sequence>
<feature type="chain" id="PRO_0000179208" description="UDP-N-acetylenolpyruvoylglucosamine reductase">
    <location>
        <begin position="1"/>
        <end position="342"/>
    </location>
</feature>
<feature type="domain" description="FAD-binding PCMH-type" evidence="2">
    <location>
        <begin position="13"/>
        <end position="183"/>
    </location>
</feature>
<feature type="active site" evidence="2">
    <location>
        <position position="159"/>
    </location>
</feature>
<feature type="active site" description="Proton donor" evidence="2">
    <location>
        <position position="229"/>
    </location>
</feature>
<feature type="active site" evidence="2">
    <location>
        <position position="325"/>
    </location>
</feature>
<feature type="binding site" evidence="1">
    <location>
        <position position="190"/>
    </location>
    <ligand>
        <name>substrate</name>
    </ligand>
</feature>
<comment type="function">
    <text evidence="2">Cell wall formation.</text>
</comment>
<comment type="catalytic activity">
    <reaction evidence="2">
        <text>UDP-N-acetyl-alpha-D-muramate + NADP(+) = UDP-N-acetyl-3-O-(1-carboxyvinyl)-alpha-D-glucosamine + NADPH + H(+)</text>
        <dbReference type="Rhea" id="RHEA:12248"/>
        <dbReference type="ChEBI" id="CHEBI:15378"/>
        <dbReference type="ChEBI" id="CHEBI:57783"/>
        <dbReference type="ChEBI" id="CHEBI:58349"/>
        <dbReference type="ChEBI" id="CHEBI:68483"/>
        <dbReference type="ChEBI" id="CHEBI:70757"/>
        <dbReference type="EC" id="1.3.1.98"/>
    </reaction>
</comment>
<comment type="cofactor">
    <cofactor evidence="2">
        <name>FAD</name>
        <dbReference type="ChEBI" id="CHEBI:57692"/>
    </cofactor>
</comment>
<comment type="pathway">
    <text evidence="2">Cell wall biogenesis; peptidoglycan biosynthesis.</text>
</comment>
<comment type="subcellular location">
    <subcellularLocation>
        <location evidence="2">Cytoplasm</location>
    </subcellularLocation>
</comment>
<comment type="similarity">
    <text evidence="2">Belongs to the MurB family.</text>
</comment>